<proteinExistence type="inferred from homology"/>
<protein>
    <recommendedName>
        <fullName evidence="1">Ribosomal RNA large subunit methyltransferase H</fullName>
        <ecNumber evidence="1">2.1.1.177</ecNumber>
    </recommendedName>
    <alternativeName>
        <fullName evidence="1">23S rRNA (pseudouridine1915-N3)-methyltransferase</fullName>
    </alternativeName>
    <alternativeName>
        <fullName evidence="1">23S rRNA m3Psi1915 methyltransferase</fullName>
    </alternativeName>
    <alternativeName>
        <fullName evidence="1">rRNA (pseudouridine-N3-)-methyltransferase RlmH</fullName>
    </alternativeName>
</protein>
<accession>Q6F0Y7</accession>
<dbReference type="EC" id="2.1.1.177" evidence="1"/>
<dbReference type="EMBL" id="AE017263">
    <property type="protein sequence ID" value="AAT75836.1"/>
    <property type="molecule type" value="Genomic_DNA"/>
</dbReference>
<dbReference type="RefSeq" id="WP_011183376.1">
    <property type="nucleotide sequence ID" value="NC_006055.1"/>
</dbReference>
<dbReference type="RefSeq" id="YP_053720.1">
    <property type="nucleotide sequence ID" value="NC_006055.1"/>
</dbReference>
<dbReference type="SMR" id="Q6F0Y7"/>
<dbReference type="STRING" id="265311.Mfl478"/>
<dbReference type="PaxDb" id="265311-Mfl478"/>
<dbReference type="EnsemblBacteria" id="AAT75836">
    <property type="protein sequence ID" value="AAT75836"/>
    <property type="gene ID" value="Mfl478"/>
</dbReference>
<dbReference type="GeneID" id="2897742"/>
<dbReference type="KEGG" id="mfl:Mfl478"/>
<dbReference type="PATRIC" id="fig|265311.5.peg.484"/>
<dbReference type="eggNOG" id="COG1576">
    <property type="taxonomic scope" value="Bacteria"/>
</dbReference>
<dbReference type="HOGENOM" id="CLU_100552_0_0_14"/>
<dbReference type="OrthoDB" id="9806643at2"/>
<dbReference type="Proteomes" id="UP000006647">
    <property type="component" value="Chromosome"/>
</dbReference>
<dbReference type="GO" id="GO:0005737">
    <property type="term" value="C:cytoplasm"/>
    <property type="evidence" value="ECO:0007669"/>
    <property type="project" value="UniProtKB-SubCell"/>
</dbReference>
<dbReference type="GO" id="GO:0070038">
    <property type="term" value="F:rRNA (pseudouridine-N3-)-methyltransferase activity"/>
    <property type="evidence" value="ECO:0007669"/>
    <property type="project" value="UniProtKB-UniRule"/>
</dbReference>
<dbReference type="CDD" id="cd18081">
    <property type="entry name" value="RlmH-like"/>
    <property type="match status" value="1"/>
</dbReference>
<dbReference type="Gene3D" id="3.40.1280.10">
    <property type="match status" value="1"/>
</dbReference>
<dbReference type="HAMAP" id="MF_00658">
    <property type="entry name" value="23SrRNA_methyltr_H"/>
    <property type="match status" value="1"/>
</dbReference>
<dbReference type="InterPro" id="IPR029028">
    <property type="entry name" value="Alpha/beta_knot_MTases"/>
</dbReference>
<dbReference type="InterPro" id="IPR003742">
    <property type="entry name" value="RlmH-like"/>
</dbReference>
<dbReference type="InterPro" id="IPR029026">
    <property type="entry name" value="tRNA_m1G_MTases_N"/>
</dbReference>
<dbReference type="PANTHER" id="PTHR33603">
    <property type="entry name" value="METHYLTRANSFERASE"/>
    <property type="match status" value="1"/>
</dbReference>
<dbReference type="PANTHER" id="PTHR33603:SF1">
    <property type="entry name" value="RIBOSOMAL RNA LARGE SUBUNIT METHYLTRANSFERASE H"/>
    <property type="match status" value="1"/>
</dbReference>
<dbReference type="Pfam" id="PF02590">
    <property type="entry name" value="SPOUT_MTase"/>
    <property type="match status" value="1"/>
</dbReference>
<dbReference type="PIRSF" id="PIRSF004505">
    <property type="entry name" value="MT_bac"/>
    <property type="match status" value="1"/>
</dbReference>
<dbReference type="SUPFAM" id="SSF75217">
    <property type="entry name" value="alpha/beta knot"/>
    <property type="match status" value="1"/>
</dbReference>
<sequence length="155" mass="18249">MNIKIVCFGKLDKKFFIDSFNEYANRISKYANLQVIELKEEYQKEDVVNKNINSDLLIDKLKAFSDHEIICMDVSSKNYSTEEFMSIIENNKNLKQAKIVFVIGPSDGFSDKFLQQNYKKVSFGNITLPHQLFRIILAEQIYRAFKIMNNEKYHK</sequence>
<name>RLMH_MESFL</name>
<feature type="chain" id="PRO_0000198142" description="Ribosomal RNA large subunit methyltransferase H">
    <location>
        <begin position="1"/>
        <end position="155"/>
    </location>
</feature>
<feature type="binding site" evidence="1">
    <location>
        <position position="104"/>
    </location>
    <ligand>
        <name>S-adenosyl-L-methionine</name>
        <dbReference type="ChEBI" id="CHEBI:59789"/>
    </ligand>
</feature>
<feature type="binding site" evidence="1">
    <location>
        <begin position="123"/>
        <end position="128"/>
    </location>
    <ligand>
        <name>S-adenosyl-L-methionine</name>
        <dbReference type="ChEBI" id="CHEBI:59789"/>
    </ligand>
</feature>
<comment type="function">
    <text evidence="1">Specifically methylates the pseudouridine at position 1915 (m3Psi1915) in 23S rRNA.</text>
</comment>
<comment type="catalytic activity">
    <reaction evidence="1">
        <text>pseudouridine(1915) in 23S rRNA + S-adenosyl-L-methionine = N(3)-methylpseudouridine(1915) in 23S rRNA + S-adenosyl-L-homocysteine + H(+)</text>
        <dbReference type="Rhea" id="RHEA:42752"/>
        <dbReference type="Rhea" id="RHEA-COMP:10221"/>
        <dbReference type="Rhea" id="RHEA-COMP:10222"/>
        <dbReference type="ChEBI" id="CHEBI:15378"/>
        <dbReference type="ChEBI" id="CHEBI:57856"/>
        <dbReference type="ChEBI" id="CHEBI:59789"/>
        <dbReference type="ChEBI" id="CHEBI:65314"/>
        <dbReference type="ChEBI" id="CHEBI:74486"/>
        <dbReference type="EC" id="2.1.1.177"/>
    </reaction>
</comment>
<comment type="subunit">
    <text evidence="1">Homodimer.</text>
</comment>
<comment type="subcellular location">
    <subcellularLocation>
        <location evidence="1">Cytoplasm</location>
    </subcellularLocation>
</comment>
<comment type="similarity">
    <text evidence="1">Belongs to the RNA methyltransferase RlmH family.</text>
</comment>
<keyword id="KW-0963">Cytoplasm</keyword>
<keyword id="KW-0489">Methyltransferase</keyword>
<keyword id="KW-1185">Reference proteome</keyword>
<keyword id="KW-0698">rRNA processing</keyword>
<keyword id="KW-0949">S-adenosyl-L-methionine</keyword>
<keyword id="KW-0808">Transferase</keyword>
<organism>
    <name type="scientific">Mesoplasma florum (strain ATCC 33453 / NBRC 100688 / NCTC 11704 / L1)</name>
    <name type="common">Acholeplasma florum</name>
    <dbReference type="NCBI Taxonomy" id="265311"/>
    <lineage>
        <taxon>Bacteria</taxon>
        <taxon>Bacillati</taxon>
        <taxon>Mycoplasmatota</taxon>
        <taxon>Mollicutes</taxon>
        <taxon>Entomoplasmatales</taxon>
        <taxon>Entomoplasmataceae</taxon>
        <taxon>Mesoplasma</taxon>
    </lineage>
</organism>
<evidence type="ECO:0000255" key="1">
    <source>
        <dbReference type="HAMAP-Rule" id="MF_00658"/>
    </source>
</evidence>
<gene>
    <name evidence="1" type="primary">rlmH</name>
    <name type="ordered locus">Mfl478</name>
</gene>
<reference key="1">
    <citation type="submission" date="2004-06" db="EMBL/GenBank/DDBJ databases">
        <authorList>
            <person name="Birren B.W."/>
            <person name="Stange-Thomann N."/>
            <person name="Hafez N."/>
            <person name="DeCaprio D."/>
            <person name="Fisher S."/>
            <person name="Butler J."/>
            <person name="Elkins T."/>
            <person name="Kodira C.D."/>
            <person name="Major J."/>
            <person name="Wang S."/>
            <person name="Nicol R."/>
            <person name="Nusbaum C."/>
        </authorList>
    </citation>
    <scope>NUCLEOTIDE SEQUENCE [LARGE SCALE GENOMIC DNA]</scope>
    <source>
        <strain>ATCC 33453 / NBRC 100688 / NCTC 11704 / L1</strain>
    </source>
</reference>